<evidence type="ECO:0000255" key="1">
    <source>
        <dbReference type="HAMAP-Rule" id="MF_00689"/>
    </source>
</evidence>
<sequence>MTEHSRDTPQFYLTAPSPCPYLPGKEERKVFTHLVGERAGALNDVLTQGGFRRSQSIAYRPACEGCRACISVRICVDDFVPSRSFRRTLKENEDLIGALRPPSPTSEQYGLFRSYVTSRHGSGGMADMSVLDYAMMVEDTHVQTRLVEYRRRGPDSRINGRGTGDLFAVALTDILGDGLSMVYSFYNPNIPERSLGTFLILDHIAKAKEMGMPYVYLGYWVNGSRKMDYKRRFLPQERLSPHGWERVDE</sequence>
<name>BPT_AZOC5</name>
<keyword id="KW-0012">Acyltransferase</keyword>
<keyword id="KW-0963">Cytoplasm</keyword>
<keyword id="KW-1185">Reference proteome</keyword>
<keyword id="KW-0808">Transferase</keyword>
<comment type="function">
    <text evidence="1">Functions in the N-end rule pathway of protein degradation where it conjugates Leu from its aminoacyl-tRNA to the N-termini of proteins containing an N-terminal aspartate or glutamate.</text>
</comment>
<comment type="catalytic activity">
    <reaction evidence="1">
        <text>N-terminal L-glutamyl-[protein] + L-leucyl-tRNA(Leu) = N-terminal L-leucyl-L-glutamyl-[protein] + tRNA(Leu) + H(+)</text>
        <dbReference type="Rhea" id="RHEA:50412"/>
        <dbReference type="Rhea" id="RHEA-COMP:9613"/>
        <dbReference type="Rhea" id="RHEA-COMP:9622"/>
        <dbReference type="Rhea" id="RHEA-COMP:12664"/>
        <dbReference type="Rhea" id="RHEA-COMP:12668"/>
        <dbReference type="ChEBI" id="CHEBI:15378"/>
        <dbReference type="ChEBI" id="CHEBI:64721"/>
        <dbReference type="ChEBI" id="CHEBI:78442"/>
        <dbReference type="ChEBI" id="CHEBI:78494"/>
        <dbReference type="ChEBI" id="CHEBI:133041"/>
        <dbReference type="EC" id="2.3.2.29"/>
    </reaction>
</comment>
<comment type="catalytic activity">
    <reaction evidence="1">
        <text>N-terminal L-aspartyl-[protein] + L-leucyl-tRNA(Leu) = N-terminal L-leucyl-L-aspartyl-[protein] + tRNA(Leu) + H(+)</text>
        <dbReference type="Rhea" id="RHEA:50420"/>
        <dbReference type="Rhea" id="RHEA-COMP:9613"/>
        <dbReference type="Rhea" id="RHEA-COMP:9622"/>
        <dbReference type="Rhea" id="RHEA-COMP:12669"/>
        <dbReference type="Rhea" id="RHEA-COMP:12674"/>
        <dbReference type="ChEBI" id="CHEBI:15378"/>
        <dbReference type="ChEBI" id="CHEBI:64720"/>
        <dbReference type="ChEBI" id="CHEBI:78442"/>
        <dbReference type="ChEBI" id="CHEBI:78494"/>
        <dbReference type="ChEBI" id="CHEBI:133042"/>
        <dbReference type="EC" id="2.3.2.29"/>
    </reaction>
</comment>
<comment type="subcellular location">
    <subcellularLocation>
        <location evidence="1">Cytoplasm</location>
    </subcellularLocation>
</comment>
<comment type="similarity">
    <text evidence="1">Belongs to the R-transferase family. Bpt subfamily.</text>
</comment>
<gene>
    <name evidence="1" type="primary">bpt</name>
    <name type="ordered locus">AZC_1540</name>
</gene>
<accession>A8HXU1</accession>
<organism>
    <name type="scientific">Azorhizobium caulinodans (strain ATCC 43989 / DSM 5975 / JCM 20966 / LMG 6465 / NBRC 14845 / NCIMB 13405 / ORS 571)</name>
    <dbReference type="NCBI Taxonomy" id="438753"/>
    <lineage>
        <taxon>Bacteria</taxon>
        <taxon>Pseudomonadati</taxon>
        <taxon>Pseudomonadota</taxon>
        <taxon>Alphaproteobacteria</taxon>
        <taxon>Hyphomicrobiales</taxon>
        <taxon>Xanthobacteraceae</taxon>
        <taxon>Azorhizobium</taxon>
    </lineage>
</organism>
<proteinExistence type="inferred from homology"/>
<reference key="1">
    <citation type="submission" date="2007-04" db="EMBL/GenBank/DDBJ databases">
        <title>Complete genome sequence of the nitrogen-fixing bacterium Azorhizobium caulinodans ORS571.</title>
        <authorList>
            <person name="Lee K.B."/>
            <person name="Backer P.D."/>
            <person name="Aono T."/>
            <person name="Liu C.T."/>
            <person name="Suzuki S."/>
            <person name="Suzuki T."/>
            <person name="Kaneko T."/>
            <person name="Yamada M."/>
            <person name="Tabata S."/>
            <person name="Kupfer D.M."/>
            <person name="Najar F.Z."/>
            <person name="Wiley G.B."/>
            <person name="Roe B."/>
            <person name="Binnewies T."/>
            <person name="Ussery D."/>
            <person name="Vereecke D."/>
            <person name="Gevers D."/>
            <person name="Holsters M."/>
            <person name="Oyaizu H."/>
        </authorList>
    </citation>
    <scope>NUCLEOTIDE SEQUENCE [LARGE SCALE GENOMIC DNA]</scope>
    <source>
        <strain>ATCC 43989 / DSM 5975 / JCM 20966 / LMG 6465 / NBRC 14845 / NCIMB 13405 / ORS 571</strain>
    </source>
</reference>
<protein>
    <recommendedName>
        <fullName evidence="1">Aspartate/glutamate leucyltransferase</fullName>
        <ecNumber evidence="1">2.3.2.29</ecNumber>
    </recommendedName>
</protein>
<feature type="chain" id="PRO_1000072740" description="Aspartate/glutamate leucyltransferase">
    <location>
        <begin position="1"/>
        <end position="249"/>
    </location>
</feature>
<dbReference type="EC" id="2.3.2.29" evidence="1"/>
<dbReference type="EMBL" id="AP009384">
    <property type="protein sequence ID" value="BAF87538.1"/>
    <property type="molecule type" value="Genomic_DNA"/>
</dbReference>
<dbReference type="RefSeq" id="WP_012170068.1">
    <property type="nucleotide sequence ID" value="NC_009937.1"/>
</dbReference>
<dbReference type="SMR" id="A8HXU1"/>
<dbReference type="STRING" id="438753.AZC_1540"/>
<dbReference type="KEGG" id="azc:AZC_1540"/>
<dbReference type="eggNOG" id="COG2935">
    <property type="taxonomic scope" value="Bacteria"/>
</dbReference>
<dbReference type="HOGENOM" id="CLU_077607_1_0_5"/>
<dbReference type="Proteomes" id="UP000000270">
    <property type="component" value="Chromosome"/>
</dbReference>
<dbReference type="GO" id="GO:0005737">
    <property type="term" value="C:cytoplasm"/>
    <property type="evidence" value="ECO:0007669"/>
    <property type="project" value="UniProtKB-SubCell"/>
</dbReference>
<dbReference type="GO" id="GO:0004057">
    <property type="term" value="F:arginyl-tRNA--protein transferase activity"/>
    <property type="evidence" value="ECO:0007669"/>
    <property type="project" value="InterPro"/>
</dbReference>
<dbReference type="GO" id="GO:0008914">
    <property type="term" value="F:leucyl-tRNA--protein transferase activity"/>
    <property type="evidence" value="ECO:0007669"/>
    <property type="project" value="UniProtKB-UniRule"/>
</dbReference>
<dbReference type="GO" id="GO:0071596">
    <property type="term" value="P:ubiquitin-dependent protein catabolic process via the N-end rule pathway"/>
    <property type="evidence" value="ECO:0007669"/>
    <property type="project" value="InterPro"/>
</dbReference>
<dbReference type="HAMAP" id="MF_00689">
    <property type="entry name" value="Bpt"/>
    <property type="match status" value="1"/>
</dbReference>
<dbReference type="InterPro" id="IPR016181">
    <property type="entry name" value="Acyl_CoA_acyltransferase"/>
</dbReference>
<dbReference type="InterPro" id="IPR017138">
    <property type="entry name" value="Asp_Glu_LeuTrfase"/>
</dbReference>
<dbReference type="InterPro" id="IPR030700">
    <property type="entry name" value="N-end_Aminoacyl_Trfase"/>
</dbReference>
<dbReference type="InterPro" id="IPR007472">
    <property type="entry name" value="N-end_Aminoacyl_Trfase_C"/>
</dbReference>
<dbReference type="InterPro" id="IPR007471">
    <property type="entry name" value="N-end_Aminoacyl_Trfase_N"/>
</dbReference>
<dbReference type="NCBIfam" id="NF002342">
    <property type="entry name" value="PRK01305.1-3"/>
    <property type="match status" value="1"/>
</dbReference>
<dbReference type="NCBIfam" id="NF002343">
    <property type="entry name" value="PRK01305.1-4"/>
    <property type="match status" value="1"/>
</dbReference>
<dbReference type="NCBIfam" id="NF002346">
    <property type="entry name" value="PRK01305.2-3"/>
    <property type="match status" value="1"/>
</dbReference>
<dbReference type="PANTHER" id="PTHR21367">
    <property type="entry name" value="ARGININE-TRNA-PROTEIN TRANSFERASE 1"/>
    <property type="match status" value="1"/>
</dbReference>
<dbReference type="PANTHER" id="PTHR21367:SF1">
    <property type="entry name" value="ARGINYL-TRNA--PROTEIN TRANSFERASE 1"/>
    <property type="match status" value="1"/>
</dbReference>
<dbReference type="Pfam" id="PF04377">
    <property type="entry name" value="ATE_C"/>
    <property type="match status" value="1"/>
</dbReference>
<dbReference type="Pfam" id="PF04376">
    <property type="entry name" value="ATE_N"/>
    <property type="match status" value="1"/>
</dbReference>
<dbReference type="PIRSF" id="PIRSF037208">
    <property type="entry name" value="ATE_pro_prd"/>
    <property type="match status" value="1"/>
</dbReference>
<dbReference type="SUPFAM" id="SSF55729">
    <property type="entry name" value="Acyl-CoA N-acyltransferases (Nat)"/>
    <property type="match status" value="1"/>
</dbReference>